<sequence length="223" mass="23983">MDTLKQLIDYYQTNGSYVMEEFWRHFLMSAYGVIFAAIIAIPLGVYIARKKRLAGWVIQIANIIQTIPALAMLAVLMLIMGLGTNTVVLSLFLYSLLPILKNTYTGIRNVDGALLESGKAMGMTKWQVLRLIEMPLALSVIMAGIRNALVIAIGVAAIGTFVGAGGLGDIIVRGTNATNGTAIILAGAIPTAVMAILADVLLGWVERTLNPVKNKRKPLTEAL</sequence>
<gene>
    <name type="primary">opuCD</name>
    <name type="ordered locus">LMRG_00877</name>
</gene>
<feature type="chain" id="PRO_0000418137" description="Carnitine transport permease protein OpuCD">
    <location>
        <begin position="1"/>
        <end position="223"/>
    </location>
</feature>
<feature type="transmembrane region" description="Helical" evidence="1">
    <location>
        <begin position="27"/>
        <end position="47"/>
    </location>
</feature>
<feature type="transmembrane region" description="Helical" evidence="1">
    <location>
        <begin position="63"/>
        <end position="83"/>
    </location>
</feature>
<feature type="transmembrane region" description="Helical" evidence="1">
    <location>
        <begin position="87"/>
        <end position="107"/>
    </location>
</feature>
<feature type="transmembrane region" description="Helical" evidence="1">
    <location>
        <begin position="148"/>
        <end position="168"/>
    </location>
</feature>
<feature type="transmembrane region" description="Helical" evidence="1">
    <location>
        <begin position="182"/>
        <end position="202"/>
    </location>
</feature>
<feature type="domain" description="ABC transmembrane type-1" evidence="1">
    <location>
        <begin position="22"/>
        <end position="202"/>
    </location>
</feature>
<comment type="function">
    <text evidence="2 3 4">Part of the ABC transporter complex OpuCABCD involved in carnitine uptake. Probably responsible for the translocation of the substrate across the membrane. Involved, with BetL and GbuABC, in osmoprotection and cryoprotection of Listeria. Can also mediate weak glycine betaine transport.</text>
</comment>
<comment type="subunit">
    <text evidence="7">The complex is composed of two ATP-binding proteins (OpuCA), two transmembrane proteins (OpuCB and OpuCD) and a solute-binding protein (OpuCC).</text>
</comment>
<comment type="subcellular location">
    <subcellularLocation>
        <location evidence="6">Cell membrane</location>
        <topology evidence="1">Multi-pass membrane protein</topology>
    </subcellularLocation>
</comment>
<comment type="induction">
    <text evidence="2 4 5">The complex is induced by either hyperosmotic stress or by low temperature. Osmotic induction is sigma B-dependent.</text>
</comment>
<comment type="similarity">
    <text evidence="6">Belongs to the binding-protein-dependent transport system permease family.</text>
</comment>
<name>OPUCD_LISM4</name>
<dbReference type="EMBL" id="CP002002">
    <property type="protein sequence ID" value="AEO06410.1"/>
    <property type="molecule type" value="Genomic_DNA"/>
</dbReference>
<dbReference type="RefSeq" id="WP_003721930.1">
    <property type="nucleotide sequence ID" value="NC_017544.1"/>
</dbReference>
<dbReference type="SMR" id="G2JZ41"/>
<dbReference type="KEGG" id="lmt:LMRG_00877"/>
<dbReference type="HOGENOM" id="CLU_046113_7_2_9"/>
<dbReference type="Proteomes" id="UP000001288">
    <property type="component" value="Chromosome"/>
</dbReference>
<dbReference type="GO" id="GO:0005886">
    <property type="term" value="C:plasma membrane"/>
    <property type="evidence" value="ECO:0007669"/>
    <property type="project" value="UniProtKB-SubCell"/>
</dbReference>
<dbReference type="GO" id="GO:0031460">
    <property type="term" value="P:glycine betaine transport"/>
    <property type="evidence" value="ECO:0007669"/>
    <property type="project" value="TreeGrafter"/>
</dbReference>
<dbReference type="GO" id="GO:0055085">
    <property type="term" value="P:transmembrane transport"/>
    <property type="evidence" value="ECO:0007669"/>
    <property type="project" value="InterPro"/>
</dbReference>
<dbReference type="CDD" id="cd06261">
    <property type="entry name" value="TM_PBP2"/>
    <property type="match status" value="1"/>
</dbReference>
<dbReference type="FunFam" id="1.10.3720.10:FF:000001">
    <property type="entry name" value="Glycine betaine ABC transporter, permease"/>
    <property type="match status" value="1"/>
</dbReference>
<dbReference type="Gene3D" id="1.10.3720.10">
    <property type="entry name" value="MetI-like"/>
    <property type="match status" value="1"/>
</dbReference>
<dbReference type="InterPro" id="IPR051204">
    <property type="entry name" value="ABC_transp_perm/SBD"/>
</dbReference>
<dbReference type="InterPro" id="IPR000515">
    <property type="entry name" value="MetI-like"/>
</dbReference>
<dbReference type="InterPro" id="IPR035906">
    <property type="entry name" value="MetI-like_sf"/>
</dbReference>
<dbReference type="PANTHER" id="PTHR30177">
    <property type="entry name" value="GLYCINE BETAINE/L-PROLINE TRANSPORT SYSTEM PERMEASE PROTEIN PROW"/>
    <property type="match status" value="1"/>
</dbReference>
<dbReference type="PANTHER" id="PTHR30177:SF4">
    <property type="entry name" value="OSMOPROTECTANT IMPORT PERMEASE PROTEIN OSMW"/>
    <property type="match status" value="1"/>
</dbReference>
<dbReference type="Pfam" id="PF00528">
    <property type="entry name" value="BPD_transp_1"/>
    <property type="match status" value="1"/>
</dbReference>
<dbReference type="SUPFAM" id="SSF161098">
    <property type="entry name" value="MetI-like"/>
    <property type="match status" value="1"/>
</dbReference>
<dbReference type="PROSITE" id="PS50928">
    <property type="entry name" value="ABC_TM1"/>
    <property type="match status" value="1"/>
</dbReference>
<reference key="1">
    <citation type="submission" date="2010-04" db="EMBL/GenBank/DDBJ databases">
        <title>The genome sequence of Listeria monocytogenes strain 10403S.</title>
        <authorList>
            <consortium name="The Broad Institute Genome Sequencing Platform"/>
            <consortium name="The Broad Institute Genome Sequencing Center for Infectious Disease"/>
            <person name="Borowsky M."/>
            <person name="Borodovsky M."/>
            <person name="Young S.K."/>
            <person name="Zeng Q."/>
            <person name="Koehrsen M."/>
            <person name="Fitzgerald M."/>
            <person name="Wiedmann M."/>
            <person name="Swaminathan B."/>
            <person name="Lauer P."/>
            <person name="Portnoy D."/>
            <person name="Cossart P."/>
            <person name="Buchrieser C."/>
            <person name="Higgins D."/>
            <person name="Abouelleil A."/>
            <person name="Alvarado L."/>
            <person name="Arachchi H.M."/>
            <person name="Berlin A."/>
            <person name="Borenstein D."/>
            <person name="Brown A."/>
            <person name="Chapman S.B."/>
            <person name="Chen Z."/>
            <person name="Dunbar C.D."/>
            <person name="Engels R."/>
            <person name="Freedman E."/>
            <person name="Gearin G."/>
            <person name="Gellesch M."/>
            <person name="Goldberg J."/>
            <person name="Griggs A."/>
            <person name="Gujja S."/>
            <person name="Heilman E."/>
            <person name="Heiman D."/>
            <person name="Howarth C."/>
            <person name="Jen D."/>
            <person name="Larson L."/>
            <person name="Lui A."/>
            <person name="MacDonald J."/>
            <person name="Mehta T."/>
            <person name="Montmayeur A."/>
            <person name="Neiman D."/>
            <person name="Park D."/>
            <person name="Pearson M."/>
            <person name="Priest M."/>
            <person name="Richards J."/>
            <person name="Roberts A."/>
            <person name="Saif S."/>
            <person name="Shea T."/>
            <person name="Shenoy N."/>
            <person name="Sisk P."/>
            <person name="Stolte C."/>
            <person name="Sykes S."/>
            <person name="Walk T."/>
            <person name="White J."/>
            <person name="Yandava C."/>
            <person name="Haas B."/>
            <person name="Nusbaum C."/>
            <person name="Birren B."/>
        </authorList>
    </citation>
    <scope>NUCLEOTIDE SEQUENCE [LARGE SCALE GENOMIC DNA]</scope>
    <source>
        <strain>10403S</strain>
    </source>
</reference>
<reference key="2">
    <citation type="journal article" date="2002" name="Appl. Environ. Microbiol.">
        <title>Identification of opuC as a chill-activated and osmotically activated carnitine transporter in Listeria monocytogenes.</title>
        <authorList>
            <person name="Angelidis A.S."/>
            <person name="Smith L.T."/>
            <person name="Hoffman L.M."/>
            <person name="Smith G.M."/>
        </authorList>
    </citation>
    <scope>FUNCTION</scope>
    <scope>INDUCTION</scope>
    <scope>SUBUNIT</scope>
    <source>
        <strain>10403S</strain>
    </source>
</reference>
<reference key="3">
    <citation type="journal article" date="2002" name="Appl. Environ. Microbiol.">
        <title>Gbu glycine betaine porter and carnitine uptake in osmotically stressed Listeria monocytogenes cells.</title>
        <authorList>
            <person name="Mendum M.L."/>
            <person name="Smith L.T."/>
        </authorList>
    </citation>
    <scope>FUNCTION IN CARNITINE UPTAKE</scope>
    <source>
        <strain>10403S</strain>
    </source>
</reference>
<reference key="4">
    <citation type="journal article" date="2003" name="Appl. Environ. Microbiol.">
        <title>Three transporters mediate uptake of glycine betaine and carnitine by Listeria monocytogenes in response to hyperosmotic stress.</title>
        <authorList>
            <person name="Angelidis A.S."/>
            <person name="Smith G.M."/>
        </authorList>
    </citation>
    <scope>FUNCTION IN CARNITINE AND GLYCINE BETAINE UPTAKE</scope>
    <scope>INDUCTION</scope>
    <source>
        <strain>10403S</strain>
    </source>
</reference>
<reference key="5">
    <citation type="journal article" date="2003" name="Appl. Environ. Microbiol.">
        <title>Role of sigmaB in regulating the compatible solute uptake systems of Listeria monocytogenes: osmotic induction of opuC is sigmaB dependent.</title>
        <authorList>
            <person name="Fraser K.R."/>
            <person name="Sue D."/>
            <person name="Wiedmann M."/>
            <person name="Boor K."/>
            <person name="O'Byrne C.P."/>
        </authorList>
    </citation>
    <scope>INDUCTION</scope>
    <source>
        <strain>10403S</strain>
    </source>
</reference>
<protein>
    <recommendedName>
        <fullName>Carnitine transport permease protein OpuCD</fullName>
    </recommendedName>
</protein>
<proteinExistence type="evidence at protein level"/>
<keyword id="KW-1003">Cell membrane</keyword>
<keyword id="KW-0472">Membrane</keyword>
<keyword id="KW-0346">Stress response</keyword>
<keyword id="KW-0812">Transmembrane</keyword>
<keyword id="KW-1133">Transmembrane helix</keyword>
<keyword id="KW-0813">Transport</keyword>
<evidence type="ECO:0000255" key="1">
    <source>
        <dbReference type="PROSITE-ProRule" id="PRU00441"/>
    </source>
</evidence>
<evidence type="ECO:0000269" key="2">
    <source>
    </source>
</evidence>
<evidence type="ECO:0000269" key="3">
    <source>
    </source>
</evidence>
<evidence type="ECO:0000269" key="4">
    <source>
    </source>
</evidence>
<evidence type="ECO:0000269" key="5">
    <source>
    </source>
</evidence>
<evidence type="ECO:0000305" key="6"/>
<evidence type="ECO:0000305" key="7">
    <source>
    </source>
</evidence>
<organism>
    <name type="scientific">Listeria monocytogenes serotype 1/2a (strain 10403S)</name>
    <dbReference type="NCBI Taxonomy" id="393133"/>
    <lineage>
        <taxon>Bacteria</taxon>
        <taxon>Bacillati</taxon>
        <taxon>Bacillota</taxon>
        <taxon>Bacilli</taxon>
        <taxon>Bacillales</taxon>
        <taxon>Listeriaceae</taxon>
        <taxon>Listeria</taxon>
    </lineage>
</organism>
<accession>G2JZ41</accession>